<dbReference type="EMBL" id="BA000019">
    <property type="protein sequence ID" value="BAB74010.1"/>
    <property type="molecule type" value="Genomic_DNA"/>
</dbReference>
<dbReference type="PIR" id="AH2094">
    <property type="entry name" value="AH2094"/>
</dbReference>
<dbReference type="RefSeq" id="WP_010996467.1">
    <property type="nucleotide sequence ID" value="NZ_RSCN01000004.1"/>
</dbReference>
<dbReference type="SMR" id="Q9WX39"/>
<dbReference type="STRING" id="103690.gene:10494340"/>
<dbReference type="KEGG" id="ana:alr2311"/>
<dbReference type="eggNOG" id="COG0724">
    <property type="taxonomic scope" value="Bacteria"/>
</dbReference>
<dbReference type="OrthoDB" id="465979at2"/>
<dbReference type="Proteomes" id="UP000002483">
    <property type="component" value="Chromosome"/>
</dbReference>
<dbReference type="GO" id="GO:0003723">
    <property type="term" value="F:RNA binding"/>
    <property type="evidence" value="ECO:0007669"/>
    <property type="project" value="UniProtKB-KW"/>
</dbReference>
<dbReference type="Gene3D" id="3.30.70.330">
    <property type="match status" value="1"/>
</dbReference>
<dbReference type="InterPro" id="IPR012677">
    <property type="entry name" value="Nucleotide-bd_a/b_plait_sf"/>
</dbReference>
<dbReference type="InterPro" id="IPR035979">
    <property type="entry name" value="RBD_domain_sf"/>
</dbReference>
<dbReference type="InterPro" id="IPR000504">
    <property type="entry name" value="RRM_dom"/>
</dbReference>
<dbReference type="InterPro" id="IPR052462">
    <property type="entry name" value="SLIRP/GR-RBP-like"/>
</dbReference>
<dbReference type="PANTHER" id="PTHR48027">
    <property type="entry name" value="HETEROGENEOUS NUCLEAR RIBONUCLEOPROTEIN 87F-RELATED"/>
    <property type="match status" value="1"/>
</dbReference>
<dbReference type="Pfam" id="PF00076">
    <property type="entry name" value="RRM_1"/>
    <property type="match status" value="1"/>
</dbReference>
<dbReference type="SMART" id="SM00360">
    <property type="entry name" value="RRM"/>
    <property type="match status" value="1"/>
</dbReference>
<dbReference type="SUPFAM" id="SSF54928">
    <property type="entry name" value="RNA-binding domain, RBD"/>
    <property type="match status" value="1"/>
</dbReference>
<dbReference type="PROSITE" id="PS50102">
    <property type="entry name" value="RRM"/>
    <property type="match status" value="1"/>
</dbReference>
<accession>Q9WX39</accession>
<evidence type="ECO:0000250" key="1"/>
<evidence type="ECO:0000255" key="2">
    <source>
        <dbReference type="PROSITE-ProRule" id="PRU00176"/>
    </source>
</evidence>
<evidence type="ECO:0000256" key="3">
    <source>
        <dbReference type="SAM" id="MobiDB-lite"/>
    </source>
</evidence>
<protein>
    <recommendedName>
        <fullName>Putative RNA-binding protein RbpF</fullName>
    </recommendedName>
</protein>
<reference key="1">
    <citation type="journal article" date="2001" name="DNA Res.">
        <title>Complete genomic sequence of the filamentous nitrogen-fixing cyanobacterium Anabaena sp. strain PCC 7120.</title>
        <authorList>
            <person name="Kaneko T."/>
            <person name="Nakamura Y."/>
            <person name="Wolk C.P."/>
            <person name="Kuritz T."/>
            <person name="Sasamoto S."/>
            <person name="Watanabe A."/>
            <person name="Iriguchi M."/>
            <person name="Ishikawa A."/>
            <person name="Kawashima K."/>
            <person name="Kimura T."/>
            <person name="Kishida Y."/>
            <person name="Kohara M."/>
            <person name="Matsumoto M."/>
            <person name="Matsuno A."/>
            <person name="Muraki A."/>
            <person name="Nakazaki N."/>
            <person name="Shimpo S."/>
            <person name="Sugimoto M."/>
            <person name="Takazawa M."/>
            <person name="Yamada M."/>
            <person name="Yasuda M."/>
            <person name="Tabata S."/>
        </authorList>
    </citation>
    <scope>NUCLEOTIDE SEQUENCE [LARGE SCALE GENOMIC DNA]</scope>
    <source>
        <strain>PCC 7120 / SAG 25.82 / UTEX 2576</strain>
    </source>
</reference>
<proteinExistence type="inferred from homology"/>
<organism>
    <name type="scientific">Nostoc sp. (strain PCC 7120 / SAG 25.82 / UTEX 2576)</name>
    <dbReference type="NCBI Taxonomy" id="103690"/>
    <lineage>
        <taxon>Bacteria</taxon>
        <taxon>Bacillati</taxon>
        <taxon>Cyanobacteriota</taxon>
        <taxon>Cyanophyceae</taxon>
        <taxon>Nostocales</taxon>
        <taxon>Nostocaceae</taxon>
        <taxon>Nostoc</taxon>
    </lineage>
</organism>
<name>RBPF_NOSS1</name>
<sequence length="105" mass="11217">MSIYVGNLSYEVTQEDISNVFAEYGSVKRVVLPTDRETGRLRGFAFVEMGSDAEETAAIEGLDGAEWMGRDLKVNKAKPKEDRGSFGGGNRGGYGGGGGGGRSRY</sequence>
<feature type="initiator methionine" description="Removed" evidence="1">
    <location>
        <position position="1"/>
    </location>
</feature>
<feature type="chain" id="PRO_0000262942" description="Putative RNA-binding protein RbpF">
    <location>
        <begin position="2"/>
        <end position="105"/>
    </location>
</feature>
<feature type="domain" description="RRM" evidence="2">
    <location>
        <begin position="2"/>
        <end position="79"/>
    </location>
</feature>
<feature type="region of interest" description="Disordered" evidence="3">
    <location>
        <begin position="75"/>
        <end position="105"/>
    </location>
</feature>
<feature type="compositionally biased region" description="Basic and acidic residues" evidence="3">
    <location>
        <begin position="75"/>
        <end position="84"/>
    </location>
</feature>
<feature type="compositionally biased region" description="Gly residues" evidence="3">
    <location>
        <begin position="85"/>
        <end position="105"/>
    </location>
</feature>
<gene>
    <name type="primary">rbpF</name>
    <name type="ordered locus">alr2311</name>
</gene>
<keyword id="KW-1185">Reference proteome</keyword>
<keyword id="KW-0694">RNA-binding</keyword>